<feature type="chain" id="PRO_1000194816" description="Phosphoribosylformylglycinamidine synthase subunit PurL">
    <location>
        <begin position="1"/>
        <end position="759"/>
    </location>
</feature>
<feature type="active site" evidence="1">
    <location>
        <position position="46"/>
    </location>
</feature>
<feature type="active site" description="Proton acceptor" evidence="1">
    <location>
        <position position="92"/>
    </location>
</feature>
<feature type="binding site" evidence="1">
    <location>
        <position position="49"/>
    </location>
    <ligand>
        <name>ATP</name>
        <dbReference type="ChEBI" id="CHEBI:30616"/>
    </ligand>
</feature>
<feature type="binding site" evidence="1">
    <location>
        <position position="88"/>
    </location>
    <ligand>
        <name>ATP</name>
        <dbReference type="ChEBI" id="CHEBI:30616"/>
    </ligand>
</feature>
<feature type="binding site" evidence="1">
    <location>
        <position position="90"/>
    </location>
    <ligand>
        <name>Mg(2+)</name>
        <dbReference type="ChEBI" id="CHEBI:18420"/>
        <label>1</label>
    </ligand>
</feature>
<feature type="binding site" evidence="1">
    <location>
        <begin position="91"/>
        <end position="94"/>
    </location>
    <ligand>
        <name>substrate</name>
    </ligand>
</feature>
<feature type="binding site" evidence="1">
    <location>
        <position position="113"/>
    </location>
    <ligand>
        <name>substrate</name>
    </ligand>
</feature>
<feature type="binding site" evidence="1">
    <location>
        <position position="114"/>
    </location>
    <ligand>
        <name>Mg(2+)</name>
        <dbReference type="ChEBI" id="CHEBI:18420"/>
        <label>2</label>
    </ligand>
</feature>
<feature type="binding site" evidence="1">
    <location>
        <position position="237"/>
    </location>
    <ligand>
        <name>substrate</name>
    </ligand>
</feature>
<feature type="binding site" evidence="1">
    <location>
        <position position="265"/>
    </location>
    <ligand>
        <name>Mg(2+)</name>
        <dbReference type="ChEBI" id="CHEBI:18420"/>
        <label>2</label>
    </ligand>
</feature>
<feature type="binding site" evidence="1">
    <location>
        <begin position="309"/>
        <end position="311"/>
    </location>
    <ligand>
        <name>substrate</name>
    </ligand>
</feature>
<feature type="binding site" evidence="1">
    <location>
        <position position="498"/>
    </location>
    <ligand>
        <name>ATP</name>
        <dbReference type="ChEBI" id="CHEBI:30616"/>
    </ligand>
</feature>
<feature type="binding site" evidence="1">
    <location>
        <position position="535"/>
    </location>
    <ligand>
        <name>ATP</name>
        <dbReference type="ChEBI" id="CHEBI:30616"/>
    </ligand>
</feature>
<feature type="binding site" evidence="1">
    <location>
        <position position="536"/>
    </location>
    <ligand>
        <name>Mg(2+)</name>
        <dbReference type="ChEBI" id="CHEBI:18420"/>
        <label>1</label>
    </ligand>
</feature>
<feature type="binding site" evidence="1">
    <location>
        <position position="538"/>
    </location>
    <ligand>
        <name>substrate</name>
    </ligand>
</feature>
<accession>B4UIX7</accession>
<proteinExistence type="inferred from homology"/>
<evidence type="ECO:0000255" key="1">
    <source>
        <dbReference type="HAMAP-Rule" id="MF_00420"/>
    </source>
</evidence>
<dbReference type="EC" id="6.3.5.3" evidence="1"/>
<dbReference type="EMBL" id="CP001131">
    <property type="protein sequence ID" value="ACG75549.1"/>
    <property type="molecule type" value="Genomic_DNA"/>
</dbReference>
<dbReference type="RefSeq" id="WP_012528298.1">
    <property type="nucleotide sequence ID" value="NC_011145.1"/>
</dbReference>
<dbReference type="SMR" id="B4UIX7"/>
<dbReference type="KEGG" id="ank:AnaeK_4346"/>
<dbReference type="HOGENOM" id="CLU_003100_0_1_7"/>
<dbReference type="OrthoDB" id="9804441at2"/>
<dbReference type="UniPathway" id="UPA00074">
    <property type="reaction ID" value="UER00128"/>
</dbReference>
<dbReference type="Proteomes" id="UP000001871">
    <property type="component" value="Chromosome"/>
</dbReference>
<dbReference type="GO" id="GO:0005737">
    <property type="term" value="C:cytoplasm"/>
    <property type="evidence" value="ECO:0007669"/>
    <property type="project" value="UniProtKB-SubCell"/>
</dbReference>
<dbReference type="GO" id="GO:0005524">
    <property type="term" value="F:ATP binding"/>
    <property type="evidence" value="ECO:0007669"/>
    <property type="project" value="UniProtKB-UniRule"/>
</dbReference>
<dbReference type="GO" id="GO:0000287">
    <property type="term" value="F:magnesium ion binding"/>
    <property type="evidence" value="ECO:0007669"/>
    <property type="project" value="UniProtKB-UniRule"/>
</dbReference>
<dbReference type="GO" id="GO:0004642">
    <property type="term" value="F:phosphoribosylformylglycinamidine synthase activity"/>
    <property type="evidence" value="ECO:0007669"/>
    <property type="project" value="UniProtKB-UniRule"/>
</dbReference>
<dbReference type="GO" id="GO:0006189">
    <property type="term" value="P:'de novo' IMP biosynthetic process"/>
    <property type="evidence" value="ECO:0007669"/>
    <property type="project" value="UniProtKB-UniRule"/>
</dbReference>
<dbReference type="CDD" id="cd02203">
    <property type="entry name" value="PurL_repeat1"/>
    <property type="match status" value="1"/>
</dbReference>
<dbReference type="CDD" id="cd02204">
    <property type="entry name" value="PurL_repeat2"/>
    <property type="match status" value="1"/>
</dbReference>
<dbReference type="FunFam" id="3.30.1330.10:FF:000004">
    <property type="entry name" value="Phosphoribosylformylglycinamidine synthase subunit PurL"/>
    <property type="match status" value="1"/>
</dbReference>
<dbReference type="Gene3D" id="3.90.650.10">
    <property type="entry name" value="PurM-like C-terminal domain"/>
    <property type="match status" value="2"/>
</dbReference>
<dbReference type="Gene3D" id="3.30.1330.10">
    <property type="entry name" value="PurM-like, N-terminal domain"/>
    <property type="match status" value="2"/>
</dbReference>
<dbReference type="HAMAP" id="MF_00420">
    <property type="entry name" value="PurL_2"/>
    <property type="match status" value="1"/>
</dbReference>
<dbReference type="InterPro" id="IPR010074">
    <property type="entry name" value="PRibForGlyAmidine_synth_PurL"/>
</dbReference>
<dbReference type="InterPro" id="IPR041609">
    <property type="entry name" value="PurL_linker"/>
</dbReference>
<dbReference type="InterPro" id="IPR010918">
    <property type="entry name" value="PurM-like_C_dom"/>
</dbReference>
<dbReference type="InterPro" id="IPR036676">
    <property type="entry name" value="PurM-like_C_sf"/>
</dbReference>
<dbReference type="InterPro" id="IPR016188">
    <property type="entry name" value="PurM-like_N"/>
</dbReference>
<dbReference type="InterPro" id="IPR036921">
    <property type="entry name" value="PurM-like_N_sf"/>
</dbReference>
<dbReference type="NCBIfam" id="TIGR01736">
    <property type="entry name" value="FGAM_synth_II"/>
    <property type="match status" value="1"/>
</dbReference>
<dbReference type="NCBIfam" id="NF002290">
    <property type="entry name" value="PRK01213.1"/>
    <property type="match status" value="1"/>
</dbReference>
<dbReference type="PANTHER" id="PTHR43555">
    <property type="entry name" value="PHOSPHORIBOSYLFORMYLGLYCINAMIDINE SYNTHASE SUBUNIT PURL"/>
    <property type="match status" value="1"/>
</dbReference>
<dbReference type="PANTHER" id="PTHR43555:SF1">
    <property type="entry name" value="PHOSPHORIBOSYLFORMYLGLYCINAMIDINE SYNTHASE SUBUNIT PURL"/>
    <property type="match status" value="1"/>
</dbReference>
<dbReference type="Pfam" id="PF00586">
    <property type="entry name" value="AIRS"/>
    <property type="match status" value="2"/>
</dbReference>
<dbReference type="Pfam" id="PF02769">
    <property type="entry name" value="AIRS_C"/>
    <property type="match status" value="2"/>
</dbReference>
<dbReference type="Pfam" id="PF18072">
    <property type="entry name" value="FGAR-AT_linker"/>
    <property type="match status" value="1"/>
</dbReference>
<dbReference type="PIRSF" id="PIRSF001587">
    <property type="entry name" value="FGAM_synthase_II"/>
    <property type="match status" value="1"/>
</dbReference>
<dbReference type="SUPFAM" id="SSF56042">
    <property type="entry name" value="PurM C-terminal domain-like"/>
    <property type="match status" value="2"/>
</dbReference>
<dbReference type="SUPFAM" id="SSF55326">
    <property type="entry name" value="PurM N-terminal domain-like"/>
    <property type="match status" value="2"/>
</dbReference>
<protein>
    <recommendedName>
        <fullName evidence="1">Phosphoribosylformylglycinamidine synthase subunit PurL</fullName>
        <shortName evidence="1">FGAM synthase</shortName>
        <ecNumber evidence="1">6.3.5.3</ecNumber>
    </recommendedName>
    <alternativeName>
        <fullName evidence="1">Formylglycinamide ribonucleotide amidotransferase subunit II</fullName>
        <shortName evidence="1">FGAR amidotransferase II</shortName>
        <shortName evidence="1">FGAR-AT II</shortName>
    </alternativeName>
    <alternativeName>
        <fullName evidence="1">Glutamine amidotransferase PurL</fullName>
    </alternativeName>
    <alternativeName>
        <fullName evidence="1">Phosphoribosylformylglycinamidine synthase subunit II</fullName>
    </alternativeName>
</protein>
<keyword id="KW-0067">ATP-binding</keyword>
<keyword id="KW-0963">Cytoplasm</keyword>
<keyword id="KW-0436">Ligase</keyword>
<keyword id="KW-0460">Magnesium</keyword>
<keyword id="KW-0479">Metal-binding</keyword>
<keyword id="KW-0547">Nucleotide-binding</keyword>
<keyword id="KW-0658">Purine biosynthesis</keyword>
<comment type="function">
    <text evidence="1">Part of the phosphoribosylformylglycinamidine synthase complex involved in the purines biosynthetic pathway. Catalyzes the ATP-dependent conversion of formylglycinamide ribonucleotide (FGAR) and glutamine to yield formylglycinamidine ribonucleotide (FGAM) and glutamate. The FGAM synthase complex is composed of three subunits. PurQ produces an ammonia molecule by converting glutamine to glutamate. PurL transfers the ammonia molecule to FGAR to form FGAM in an ATP-dependent manner. PurS interacts with PurQ and PurL and is thought to assist in the transfer of the ammonia molecule from PurQ to PurL.</text>
</comment>
<comment type="catalytic activity">
    <reaction evidence="1">
        <text>N(2)-formyl-N(1)-(5-phospho-beta-D-ribosyl)glycinamide + L-glutamine + ATP + H2O = 2-formamido-N(1)-(5-O-phospho-beta-D-ribosyl)acetamidine + L-glutamate + ADP + phosphate + H(+)</text>
        <dbReference type="Rhea" id="RHEA:17129"/>
        <dbReference type="ChEBI" id="CHEBI:15377"/>
        <dbReference type="ChEBI" id="CHEBI:15378"/>
        <dbReference type="ChEBI" id="CHEBI:29985"/>
        <dbReference type="ChEBI" id="CHEBI:30616"/>
        <dbReference type="ChEBI" id="CHEBI:43474"/>
        <dbReference type="ChEBI" id="CHEBI:58359"/>
        <dbReference type="ChEBI" id="CHEBI:147286"/>
        <dbReference type="ChEBI" id="CHEBI:147287"/>
        <dbReference type="ChEBI" id="CHEBI:456216"/>
        <dbReference type="EC" id="6.3.5.3"/>
    </reaction>
</comment>
<comment type="pathway">
    <text evidence="1">Purine metabolism; IMP biosynthesis via de novo pathway; 5-amino-1-(5-phospho-D-ribosyl)imidazole from N(2)-formyl-N(1)-(5-phospho-D-ribosyl)glycinamide: step 1/2.</text>
</comment>
<comment type="subunit">
    <text evidence="1">Monomer. Part of the FGAM synthase complex composed of 1 PurL, 1 PurQ and 2 PurS subunits.</text>
</comment>
<comment type="subcellular location">
    <subcellularLocation>
        <location evidence="1">Cytoplasm</location>
    </subcellularLocation>
</comment>
<comment type="similarity">
    <text evidence="1">Belongs to the FGAMS family.</text>
</comment>
<organism>
    <name type="scientific">Anaeromyxobacter sp. (strain K)</name>
    <dbReference type="NCBI Taxonomy" id="447217"/>
    <lineage>
        <taxon>Bacteria</taxon>
        <taxon>Pseudomonadati</taxon>
        <taxon>Myxococcota</taxon>
        <taxon>Myxococcia</taxon>
        <taxon>Myxococcales</taxon>
        <taxon>Cystobacterineae</taxon>
        <taxon>Anaeromyxobacteraceae</taxon>
        <taxon>Anaeromyxobacter</taxon>
    </lineage>
</organism>
<sequence length="759" mass="80494">MTEPITPEIVAQHGLKPDEYQRILEHLGRTPTLTELGVFSVMWSEHCSYKSSRVHLKTFPTSGPRVLQGPGENAGVVDLGDGLAAAFKMESHNHPSYIEPYQGAATGVGGILRDVFTMGARPIASLNALRFGDPSHPRTAYLLEGVVAGIGGYGNCMGVPTVGGEVAFHPSYNGNCLVNAFTLGILPADKIFRGTAAGVGNPVMYVGAKTGRDGIHGATMASAEFDASTEEKRPTVQVGDPFMEKLLLEACLELFQTDAVVGIQDMGAAGLTSSSVEMAGRGGNGLDLFLDQVPLREEGMTPYEILLSESQERMLLVAAEGKEELVRSICEKWDLDVAVIGRVTASGRWRAHWRGAVVADLPVDPLTEGAPKYHRPMTPHPALPALHAFDLATLPEPADLGAALVRLLARPTIASKEWVYRQYDHMVRLVGAVRPGGDAAVVRLAVSHDAHAHKGIALSVGVNGRFCFLDPYLGAMHAVAECARNIACVGGEPIAITDCLNFGNPEKPEIMWQFAECVRGIGDACRAFGTPVVSGNVSLYNETEGQGILPTPTVGMVGLVEPVERTCHSTFRDAGDVIALVGSLQGEVGGSEYLSAEHGKEAGRPPALDLAREKAVQETVRRAVRAGLLSSAHDCSEGGLAVALAESCMMHEVPSDGSKPAWIGCAVRIPFPVRKDFVLFGEDASRILVSLPKENAARFVDLAQQCGAPVIRLGAVGGDRLEIQGALSVPVEELARAWRDGIPAVLRRDAAHAGATAPV</sequence>
<name>PURL_ANASK</name>
<gene>
    <name evidence="1" type="primary">purL</name>
    <name type="ordered locus">AnaeK_4346</name>
</gene>
<reference key="1">
    <citation type="submission" date="2008-08" db="EMBL/GenBank/DDBJ databases">
        <title>Complete sequence of Anaeromyxobacter sp. K.</title>
        <authorList>
            <consortium name="US DOE Joint Genome Institute"/>
            <person name="Lucas S."/>
            <person name="Copeland A."/>
            <person name="Lapidus A."/>
            <person name="Glavina del Rio T."/>
            <person name="Dalin E."/>
            <person name="Tice H."/>
            <person name="Bruce D."/>
            <person name="Goodwin L."/>
            <person name="Pitluck S."/>
            <person name="Saunders E."/>
            <person name="Brettin T."/>
            <person name="Detter J.C."/>
            <person name="Han C."/>
            <person name="Larimer F."/>
            <person name="Land M."/>
            <person name="Hauser L."/>
            <person name="Kyrpides N."/>
            <person name="Ovchinnikiva G."/>
            <person name="Beliaev A."/>
        </authorList>
    </citation>
    <scope>NUCLEOTIDE SEQUENCE [LARGE SCALE GENOMIC DNA]</scope>
    <source>
        <strain>K</strain>
    </source>
</reference>